<dbReference type="EC" id="6.1.1.15" evidence="1"/>
<dbReference type="EMBL" id="CP000477">
    <property type="protein sequence ID" value="ABK15407.1"/>
    <property type="molecule type" value="Genomic_DNA"/>
</dbReference>
<dbReference type="RefSeq" id="WP_011696785.1">
    <property type="nucleotide sequence ID" value="NC_008553.1"/>
</dbReference>
<dbReference type="SMR" id="A0B9N3"/>
<dbReference type="STRING" id="349307.Mthe_1640"/>
<dbReference type="GeneID" id="4462512"/>
<dbReference type="KEGG" id="mtp:Mthe_1640"/>
<dbReference type="HOGENOM" id="CLU_001882_4_2_2"/>
<dbReference type="OrthoDB" id="7375at2157"/>
<dbReference type="Proteomes" id="UP000000674">
    <property type="component" value="Chromosome"/>
</dbReference>
<dbReference type="GO" id="GO:0017101">
    <property type="term" value="C:aminoacyl-tRNA synthetase multienzyme complex"/>
    <property type="evidence" value="ECO:0007669"/>
    <property type="project" value="TreeGrafter"/>
</dbReference>
<dbReference type="GO" id="GO:0005737">
    <property type="term" value="C:cytoplasm"/>
    <property type="evidence" value="ECO:0007669"/>
    <property type="project" value="UniProtKB-SubCell"/>
</dbReference>
<dbReference type="GO" id="GO:0005524">
    <property type="term" value="F:ATP binding"/>
    <property type="evidence" value="ECO:0007669"/>
    <property type="project" value="UniProtKB-UniRule"/>
</dbReference>
<dbReference type="GO" id="GO:0004827">
    <property type="term" value="F:proline-tRNA ligase activity"/>
    <property type="evidence" value="ECO:0007669"/>
    <property type="project" value="UniProtKB-UniRule"/>
</dbReference>
<dbReference type="GO" id="GO:0006433">
    <property type="term" value="P:prolyl-tRNA aminoacylation"/>
    <property type="evidence" value="ECO:0007669"/>
    <property type="project" value="UniProtKB-UniRule"/>
</dbReference>
<dbReference type="CDD" id="cd00862">
    <property type="entry name" value="ProRS_anticodon_zinc"/>
    <property type="match status" value="1"/>
</dbReference>
<dbReference type="CDD" id="cd00778">
    <property type="entry name" value="ProRS_core_arch_euk"/>
    <property type="match status" value="1"/>
</dbReference>
<dbReference type="FunFam" id="3.30.930.10:FF:000037">
    <property type="entry name" value="Proline--tRNA ligase"/>
    <property type="match status" value="1"/>
</dbReference>
<dbReference type="Gene3D" id="3.40.50.800">
    <property type="entry name" value="Anticodon-binding domain"/>
    <property type="match status" value="1"/>
</dbReference>
<dbReference type="Gene3D" id="3.30.930.10">
    <property type="entry name" value="Bira Bifunctional Protein, Domain 2"/>
    <property type="match status" value="1"/>
</dbReference>
<dbReference type="Gene3D" id="3.30.110.30">
    <property type="entry name" value="C-terminal domain of ProRS"/>
    <property type="match status" value="1"/>
</dbReference>
<dbReference type="HAMAP" id="MF_01571">
    <property type="entry name" value="Pro_tRNA_synth_type3"/>
    <property type="match status" value="1"/>
</dbReference>
<dbReference type="InterPro" id="IPR002314">
    <property type="entry name" value="aa-tRNA-synt_IIb"/>
</dbReference>
<dbReference type="InterPro" id="IPR006195">
    <property type="entry name" value="aa-tRNA-synth_II"/>
</dbReference>
<dbReference type="InterPro" id="IPR045864">
    <property type="entry name" value="aa-tRNA-synth_II/BPL/LPL"/>
</dbReference>
<dbReference type="InterPro" id="IPR004154">
    <property type="entry name" value="Anticodon-bd"/>
</dbReference>
<dbReference type="InterPro" id="IPR036621">
    <property type="entry name" value="Anticodon-bd_dom_sf"/>
</dbReference>
<dbReference type="InterPro" id="IPR002316">
    <property type="entry name" value="Pro-tRNA-ligase_IIa"/>
</dbReference>
<dbReference type="InterPro" id="IPR004499">
    <property type="entry name" value="Pro-tRNA-ligase_IIa_arc-type"/>
</dbReference>
<dbReference type="InterPro" id="IPR016061">
    <property type="entry name" value="Pro-tRNA_ligase_II_C"/>
</dbReference>
<dbReference type="InterPro" id="IPR017449">
    <property type="entry name" value="Pro-tRNA_synth_II"/>
</dbReference>
<dbReference type="InterPro" id="IPR033721">
    <property type="entry name" value="ProRS_core_arch_euk"/>
</dbReference>
<dbReference type="NCBIfam" id="TIGR00408">
    <property type="entry name" value="proS_fam_I"/>
    <property type="match status" value="1"/>
</dbReference>
<dbReference type="PANTHER" id="PTHR43382:SF2">
    <property type="entry name" value="BIFUNCTIONAL GLUTAMATE_PROLINE--TRNA LIGASE"/>
    <property type="match status" value="1"/>
</dbReference>
<dbReference type="PANTHER" id="PTHR43382">
    <property type="entry name" value="PROLYL-TRNA SYNTHETASE"/>
    <property type="match status" value="1"/>
</dbReference>
<dbReference type="Pfam" id="PF03129">
    <property type="entry name" value="HGTP_anticodon"/>
    <property type="match status" value="1"/>
</dbReference>
<dbReference type="Pfam" id="PF09180">
    <property type="entry name" value="ProRS-C_1"/>
    <property type="match status" value="1"/>
</dbReference>
<dbReference type="Pfam" id="PF00587">
    <property type="entry name" value="tRNA-synt_2b"/>
    <property type="match status" value="1"/>
</dbReference>
<dbReference type="PRINTS" id="PR01046">
    <property type="entry name" value="TRNASYNTHPRO"/>
</dbReference>
<dbReference type="SMART" id="SM00946">
    <property type="entry name" value="ProRS-C_1"/>
    <property type="match status" value="1"/>
</dbReference>
<dbReference type="SUPFAM" id="SSF64586">
    <property type="entry name" value="C-terminal domain of ProRS"/>
    <property type="match status" value="1"/>
</dbReference>
<dbReference type="SUPFAM" id="SSF52954">
    <property type="entry name" value="Class II aaRS ABD-related"/>
    <property type="match status" value="1"/>
</dbReference>
<dbReference type="SUPFAM" id="SSF55681">
    <property type="entry name" value="Class II aaRS and biotin synthetases"/>
    <property type="match status" value="1"/>
</dbReference>
<dbReference type="PROSITE" id="PS50862">
    <property type="entry name" value="AA_TRNA_LIGASE_II"/>
    <property type="match status" value="1"/>
</dbReference>
<sequence>MTKKEERDAKLPPKSNFSEWYHELLRSAEIVDVRYPVKGMSVWYPFGFALRSHVYQIIKELLDVDHYETQFPLLIPETEFMKEAEHIKGFEDEVYWVTHGGRDPLDIKLALRPTSETAIYPMLKLWIRSHADLPLRIYQIVNTFRYETKHTRPLIRLREITSFKEAHTAHATWEEAAMQVEIAIQRYIEFYRRLAIPCLVSKRPSWDKFPGADYSIALDVIMPDGRTLQVGTAHLLGTNFAKTYEITYEDEHGEQRYVNQTCYGISERCIAALIAVHGDDKGLVLPWRVAPVQVVIVPIIFGEREPIIEVCRSIASTLAGRNIRVRLDDGDERPGAKFYKWEMRGVPVRIEIGPRDIKNGVVTIVRRDGVRKTLPMDERLVDAILIEAEELQTVLYNRAKEFMDSKIKLVSSLDEARSQVQSGVARVPWCGSVECGHALEDQIGANLLGEPRGDELPPMRCLVCGRESTGSTYMARQY</sequence>
<organism>
    <name type="scientific">Methanothrix thermoacetophila (strain DSM 6194 / JCM 14653 / NBRC 101360 / PT)</name>
    <name type="common">Methanosaeta thermophila</name>
    <dbReference type="NCBI Taxonomy" id="349307"/>
    <lineage>
        <taxon>Archaea</taxon>
        <taxon>Methanobacteriati</taxon>
        <taxon>Methanobacteriota</taxon>
        <taxon>Stenosarchaea group</taxon>
        <taxon>Methanomicrobia</taxon>
        <taxon>Methanotrichales</taxon>
        <taxon>Methanotrichaceae</taxon>
        <taxon>Methanothrix</taxon>
    </lineage>
</organism>
<keyword id="KW-0030">Aminoacyl-tRNA synthetase</keyword>
<keyword id="KW-0067">ATP-binding</keyword>
<keyword id="KW-0963">Cytoplasm</keyword>
<keyword id="KW-0436">Ligase</keyword>
<keyword id="KW-0547">Nucleotide-binding</keyword>
<keyword id="KW-0648">Protein biosynthesis</keyword>
<keyword id="KW-1185">Reference proteome</keyword>
<comment type="function">
    <text evidence="1">Catalyzes the attachment of proline to tRNA(Pro) in a two-step reaction: proline is first activated by ATP to form Pro-AMP and then transferred to the acceptor end of tRNA(Pro).</text>
</comment>
<comment type="catalytic activity">
    <reaction evidence="1">
        <text>tRNA(Pro) + L-proline + ATP = L-prolyl-tRNA(Pro) + AMP + diphosphate</text>
        <dbReference type="Rhea" id="RHEA:14305"/>
        <dbReference type="Rhea" id="RHEA-COMP:9700"/>
        <dbReference type="Rhea" id="RHEA-COMP:9702"/>
        <dbReference type="ChEBI" id="CHEBI:30616"/>
        <dbReference type="ChEBI" id="CHEBI:33019"/>
        <dbReference type="ChEBI" id="CHEBI:60039"/>
        <dbReference type="ChEBI" id="CHEBI:78442"/>
        <dbReference type="ChEBI" id="CHEBI:78532"/>
        <dbReference type="ChEBI" id="CHEBI:456215"/>
        <dbReference type="EC" id="6.1.1.15"/>
    </reaction>
</comment>
<comment type="subunit">
    <text evidence="1">Homodimer.</text>
</comment>
<comment type="subcellular location">
    <subcellularLocation>
        <location evidence="1">Cytoplasm</location>
    </subcellularLocation>
</comment>
<comment type="domain">
    <text evidence="1">Consists of three domains: the N-terminal catalytic domain, the anticodon-binding domain and the C-terminal extension.</text>
</comment>
<comment type="similarity">
    <text evidence="1">Belongs to the class-II aminoacyl-tRNA synthetase family. ProS type 3 subfamily.</text>
</comment>
<gene>
    <name evidence="1" type="primary">proS</name>
    <name type="ordered locus">Mthe_1640</name>
</gene>
<evidence type="ECO:0000255" key="1">
    <source>
        <dbReference type="HAMAP-Rule" id="MF_01571"/>
    </source>
</evidence>
<feature type="chain" id="PRO_0000288422" description="Proline--tRNA ligase">
    <location>
        <begin position="1"/>
        <end position="478"/>
    </location>
</feature>
<reference key="1">
    <citation type="submission" date="2006-10" db="EMBL/GenBank/DDBJ databases">
        <title>Complete sequence of Methanosaeta thermophila PT.</title>
        <authorList>
            <consortium name="US DOE Joint Genome Institute"/>
            <person name="Copeland A."/>
            <person name="Lucas S."/>
            <person name="Lapidus A."/>
            <person name="Barry K."/>
            <person name="Detter J.C."/>
            <person name="Glavina del Rio T."/>
            <person name="Hammon N."/>
            <person name="Israni S."/>
            <person name="Pitluck S."/>
            <person name="Chain P."/>
            <person name="Malfatti S."/>
            <person name="Shin M."/>
            <person name="Vergez L."/>
            <person name="Schmutz J."/>
            <person name="Larimer F."/>
            <person name="Land M."/>
            <person name="Hauser L."/>
            <person name="Kyrpides N."/>
            <person name="Kim E."/>
            <person name="Smith K.S."/>
            <person name="Ingram-Smith C."/>
            <person name="Richardson P."/>
        </authorList>
    </citation>
    <scope>NUCLEOTIDE SEQUENCE [LARGE SCALE GENOMIC DNA]</scope>
    <source>
        <strain>DSM 6194 / JCM 14653 / NBRC 101360 / PT</strain>
    </source>
</reference>
<accession>A0B9N3</accession>
<proteinExistence type="inferred from homology"/>
<name>SYP_METTP</name>
<protein>
    <recommendedName>
        <fullName evidence="1">Proline--tRNA ligase</fullName>
        <ecNumber evidence="1">6.1.1.15</ecNumber>
    </recommendedName>
    <alternativeName>
        <fullName evidence="1">Prolyl-tRNA synthetase</fullName>
        <shortName evidence="1">ProRS</shortName>
    </alternativeName>
</protein>